<evidence type="ECO:0000255" key="1">
    <source>
        <dbReference type="HAMAP-Rule" id="MF_01310"/>
    </source>
</evidence>
<evidence type="ECO:0000305" key="2"/>
<proteinExistence type="inferred from homology"/>
<sequence>MAKAPIRARKRVRKQVSDGVAHIHASFNNTIVTITDRQGNALGWATAGGSGFRGSRKSTPFAAQVAAERCADAVKEYGIKNLEVMVKGPGPGRESTIRALNAAGFRITNITDVTPIPHNGCRPPKKRRV</sequence>
<keyword id="KW-1185">Reference proteome</keyword>
<keyword id="KW-0687">Ribonucleoprotein</keyword>
<keyword id="KW-0689">Ribosomal protein</keyword>
<keyword id="KW-0694">RNA-binding</keyword>
<keyword id="KW-0699">rRNA-binding</keyword>
<protein>
    <recommendedName>
        <fullName evidence="1">Small ribosomal subunit protein uS11</fullName>
    </recommendedName>
    <alternativeName>
        <fullName evidence="2">30S ribosomal protein S11</fullName>
    </alternativeName>
</protein>
<dbReference type="EMBL" id="CP000038">
    <property type="protein sequence ID" value="AAZ90000.1"/>
    <property type="molecule type" value="Genomic_DNA"/>
</dbReference>
<dbReference type="RefSeq" id="WP_001029684.1">
    <property type="nucleotide sequence ID" value="NC_007384.1"/>
</dbReference>
<dbReference type="SMR" id="Q3YWW2"/>
<dbReference type="GeneID" id="93778690"/>
<dbReference type="KEGG" id="ssn:SSON_3438"/>
<dbReference type="HOGENOM" id="CLU_072439_5_0_6"/>
<dbReference type="Proteomes" id="UP000002529">
    <property type="component" value="Chromosome"/>
</dbReference>
<dbReference type="GO" id="GO:1990904">
    <property type="term" value="C:ribonucleoprotein complex"/>
    <property type="evidence" value="ECO:0007669"/>
    <property type="project" value="UniProtKB-KW"/>
</dbReference>
<dbReference type="GO" id="GO:0005840">
    <property type="term" value="C:ribosome"/>
    <property type="evidence" value="ECO:0007669"/>
    <property type="project" value="UniProtKB-KW"/>
</dbReference>
<dbReference type="GO" id="GO:0019843">
    <property type="term" value="F:rRNA binding"/>
    <property type="evidence" value="ECO:0007669"/>
    <property type="project" value="UniProtKB-UniRule"/>
</dbReference>
<dbReference type="GO" id="GO:0003735">
    <property type="term" value="F:structural constituent of ribosome"/>
    <property type="evidence" value="ECO:0007669"/>
    <property type="project" value="InterPro"/>
</dbReference>
<dbReference type="GO" id="GO:0006412">
    <property type="term" value="P:translation"/>
    <property type="evidence" value="ECO:0007669"/>
    <property type="project" value="UniProtKB-UniRule"/>
</dbReference>
<dbReference type="FunFam" id="3.30.420.80:FF:000001">
    <property type="entry name" value="30S ribosomal protein S11"/>
    <property type="match status" value="1"/>
</dbReference>
<dbReference type="Gene3D" id="3.30.420.80">
    <property type="entry name" value="Ribosomal protein S11"/>
    <property type="match status" value="1"/>
</dbReference>
<dbReference type="HAMAP" id="MF_01310">
    <property type="entry name" value="Ribosomal_uS11"/>
    <property type="match status" value="1"/>
</dbReference>
<dbReference type="InterPro" id="IPR001971">
    <property type="entry name" value="Ribosomal_uS11"/>
</dbReference>
<dbReference type="InterPro" id="IPR019981">
    <property type="entry name" value="Ribosomal_uS11_bac-type"/>
</dbReference>
<dbReference type="InterPro" id="IPR018102">
    <property type="entry name" value="Ribosomal_uS11_CS"/>
</dbReference>
<dbReference type="InterPro" id="IPR036967">
    <property type="entry name" value="Ribosomal_uS11_sf"/>
</dbReference>
<dbReference type="NCBIfam" id="NF003698">
    <property type="entry name" value="PRK05309.1"/>
    <property type="match status" value="1"/>
</dbReference>
<dbReference type="NCBIfam" id="TIGR03632">
    <property type="entry name" value="uS11_bact"/>
    <property type="match status" value="1"/>
</dbReference>
<dbReference type="PANTHER" id="PTHR11759">
    <property type="entry name" value="40S RIBOSOMAL PROTEIN S14/30S RIBOSOMAL PROTEIN S11"/>
    <property type="match status" value="1"/>
</dbReference>
<dbReference type="Pfam" id="PF00411">
    <property type="entry name" value="Ribosomal_S11"/>
    <property type="match status" value="1"/>
</dbReference>
<dbReference type="PIRSF" id="PIRSF002131">
    <property type="entry name" value="Ribosomal_S11"/>
    <property type="match status" value="1"/>
</dbReference>
<dbReference type="SUPFAM" id="SSF53137">
    <property type="entry name" value="Translational machinery components"/>
    <property type="match status" value="1"/>
</dbReference>
<dbReference type="PROSITE" id="PS00054">
    <property type="entry name" value="RIBOSOMAL_S11"/>
    <property type="match status" value="1"/>
</dbReference>
<organism>
    <name type="scientific">Shigella sonnei (strain Ss046)</name>
    <dbReference type="NCBI Taxonomy" id="300269"/>
    <lineage>
        <taxon>Bacteria</taxon>
        <taxon>Pseudomonadati</taxon>
        <taxon>Pseudomonadota</taxon>
        <taxon>Gammaproteobacteria</taxon>
        <taxon>Enterobacterales</taxon>
        <taxon>Enterobacteriaceae</taxon>
        <taxon>Shigella</taxon>
    </lineage>
</organism>
<name>RS11_SHISS</name>
<comment type="function">
    <text evidence="1">Located on the platform of the 30S subunit, it bridges several disparate RNA helices of the 16S rRNA. Forms part of the Shine-Dalgarno cleft in the 70S ribosome.</text>
</comment>
<comment type="subunit">
    <text evidence="1">Part of the 30S ribosomal subunit. Interacts with proteins S7 and S18. Binds to IF-3.</text>
</comment>
<comment type="similarity">
    <text evidence="1">Belongs to the universal ribosomal protein uS11 family.</text>
</comment>
<reference key="1">
    <citation type="journal article" date="2005" name="Nucleic Acids Res.">
        <title>Genome dynamics and diversity of Shigella species, the etiologic agents of bacillary dysentery.</title>
        <authorList>
            <person name="Yang F."/>
            <person name="Yang J."/>
            <person name="Zhang X."/>
            <person name="Chen L."/>
            <person name="Jiang Y."/>
            <person name="Yan Y."/>
            <person name="Tang X."/>
            <person name="Wang J."/>
            <person name="Xiong Z."/>
            <person name="Dong J."/>
            <person name="Xue Y."/>
            <person name="Zhu Y."/>
            <person name="Xu X."/>
            <person name="Sun L."/>
            <person name="Chen S."/>
            <person name="Nie H."/>
            <person name="Peng J."/>
            <person name="Xu J."/>
            <person name="Wang Y."/>
            <person name="Yuan Z."/>
            <person name="Wen Y."/>
            <person name="Yao Z."/>
            <person name="Shen Y."/>
            <person name="Qiang B."/>
            <person name="Hou Y."/>
            <person name="Yu J."/>
            <person name="Jin Q."/>
        </authorList>
    </citation>
    <scope>NUCLEOTIDE SEQUENCE [LARGE SCALE GENOMIC DNA]</scope>
    <source>
        <strain>Ss046</strain>
    </source>
</reference>
<accession>Q3YWW2</accession>
<feature type="chain" id="PRO_0000230431" description="Small ribosomal subunit protein uS11">
    <location>
        <begin position="1"/>
        <end position="129"/>
    </location>
</feature>
<gene>
    <name evidence="1" type="primary">rpsK</name>
    <name type="ordered locus">SSON_3438</name>
</gene>